<keyword id="KW-0067">ATP-binding</keyword>
<keyword id="KW-0150">Chloroplast</keyword>
<keyword id="KW-0175">Coiled coil</keyword>
<keyword id="KW-0493">Microtubule</keyword>
<keyword id="KW-0505">Motor protein</keyword>
<keyword id="KW-0547">Nucleotide-binding</keyword>
<keyword id="KW-0934">Plastid</keyword>
<keyword id="KW-1185">Reference proteome</keyword>
<keyword id="KW-0809">Transit peptide</keyword>
<sequence>MATRPASRQRRASSAAAAVAVVRSSPQPQQQQQQQLPIPQSGSPTSTTTTTTSSSRLTPELSLDGPASPLFAGLDEDPAPKENVTVTVRFRPLSPREIRQGEEVAWYADGDTVVRSEQNPSVAYAYDRVFAPTTTTRQVYDVAAQHVVSGAMEGVNGTIFAYGVTSSGKTHTMHGDQRSPGIIPLAVKDAFSIIQETPNREFLLRVSYLEIYNEVVNDLLNPAGQNLRIREDPQGTFVEGIKEEVVLSPAHALSLIAAGEEHRHVGSTNFNLLSSRSHTIFTLTVESSPCGESNEGEAVTFSQLNLIDLAGSESSRAETTGVRRKEGSYINKSLLTLGTVISKLTDGKATHIPFRDSKLTRLLQSSLSGQGRVSLICTVTPASSNSEETHNTLKFAHRAKRIEVQASQNKIIDEKSLIKKYQNEIRRLKEELEQLKMGIITGTPVKDAGEDNIILWKQKLEDGNVKLQSRLEQEEEAKAALLARIQRLTKLILVSTKATQTSRFSPHPGPRRRHSFGEEELAYLPYKRRDIVLDNESNELLSPVEGLGMTLEDSKEEKKNRKGILNWFKLRKREGGASILTSSEGDKSSLTKSTAPSTPIGESVNFPSEPRISNSLVGESASVDLFSIGHGEFATDSLHGEETPLASRKTIDHVDLLREQLKILSGEVALHTSVLKRLTEEAGRSPNNEKIQMEMKKVNDEIKGKKHQIASLERQIPHSISNNQGMADKLELTPSYAELLEQLNEKSFDLEVKAADNRVIQDQLNEKTTECMELQEEVAHLKEQLYQTLQAKDSLSNSIMMQKNAGINHETDNHADQELSVPREVPGETSPKEPQSVEIDELKQKVCELIEVKAQLETRNQKLLEESTYAKGLASAAGVELKALSEEVTKLMNQNEKLASELASVRSPTPRRANSGLRGTRRDSISRRHEPAPRRDNNAGYEREKALEAVLMEKEQKEAELQRRIEESKQKEAFLESELANMWVLVAKLKKSQGHDLEDFDTKYIGS</sequence>
<dbReference type="EMBL" id="AP004853">
    <property type="protein sequence ID" value="BAD17149.1"/>
    <property type="status" value="ALT_SEQ"/>
    <property type="molecule type" value="Genomic_DNA"/>
</dbReference>
<dbReference type="EMBL" id="AP005538">
    <property type="protein sequence ID" value="BAD17367.1"/>
    <property type="status" value="ALT_SEQ"/>
    <property type="molecule type" value="Genomic_DNA"/>
</dbReference>
<dbReference type="EMBL" id="AP014958">
    <property type="protein sequence ID" value="BAS81163.1"/>
    <property type="status" value="ALT_SEQ"/>
    <property type="molecule type" value="Genomic_DNA"/>
</dbReference>
<dbReference type="EMBL" id="CM000139">
    <property type="protein sequence ID" value="EEE57896.1"/>
    <property type="status" value="ALT_SEQ"/>
    <property type="molecule type" value="Genomic_DNA"/>
</dbReference>
<dbReference type="EMBL" id="AK068672">
    <property type="status" value="NOT_ANNOTATED_CDS"/>
    <property type="molecule type" value="mRNA"/>
</dbReference>
<dbReference type="RefSeq" id="XP_015627269.1">
    <property type="nucleotide sequence ID" value="XM_015771783.1"/>
</dbReference>
<dbReference type="SMR" id="Q6YZ52"/>
<dbReference type="FunCoup" id="Q6YZ52">
    <property type="interactions" value="909"/>
</dbReference>
<dbReference type="STRING" id="39947.Q6YZ52"/>
<dbReference type="PaxDb" id="39947-Q6YZ52"/>
<dbReference type="EnsemblPlants" id="Os02t0775400-02">
    <property type="protein sequence ID" value="Os02t0775400-02"/>
    <property type="gene ID" value="Os02g0775400"/>
</dbReference>
<dbReference type="Gramene" id="Os02t0775400-02">
    <property type="protein sequence ID" value="Os02t0775400-02"/>
    <property type="gene ID" value="Os02g0775400"/>
</dbReference>
<dbReference type="eggNOG" id="KOG0242">
    <property type="taxonomic scope" value="Eukaryota"/>
</dbReference>
<dbReference type="HOGENOM" id="CLU_498199_0_0_1"/>
<dbReference type="InParanoid" id="Q6YZ52"/>
<dbReference type="OrthoDB" id="3176171at2759"/>
<dbReference type="Proteomes" id="UP000000763">
    <property type="component" value="Chromosome 2"/>
</dbReference>
<dbReference type="Proteomes" id="UP000007752">
    <property type="component" value="Chromosome 2"/>
</dbReference>
<dbReference type="Proteomes" id="UP000059680">
    <property type="component" value="Chromosome 2"/>
</dbReference>
<dbReference type="GO" id="GO:0009507">
    <property type="term" value="C:chloroplast"/>
    <property type="evidence" value="ECO:0007669"/>
    <property type="project" value="UniProtKB-SubCell"/>
</dbReference>
<dbReference type="GO" id="GO:0005737">
    <property type="term" value="C:cytoplasm"/>
    <property type="evidence" value="ECO:0000318"/>
    <property type="project" value="GO_Central"/>
</dbReference>
<dbReference type="GO" id="GO:0005871">
    <property type="term" value="C:kinesin complex"/>
    <property type="evidence" value="ECO:0000318"/>
    <property type="project" value="GO_Central"/>
</dbReference>
<dbReference type="GO" id="GO:0005874">
    <property type="term" value="C:microtubule"/>
    <property type="evidence" value="ECO:0000318"/>
    <property type="project" value="GO_Central"/>
</dbReference>
<dbReference type="GO" id="GO:0043531">
    <property type="term" value="F:ADP binding"/>
    <property type="evidence" value="ECO:0000314"/>
    <property type="project" value="UniProtKB"/>
</dbReference>
<dbReference type="GO" id="GO:0005524">
    <property type="term" value="F:ATP binding"/>
    <property type="evidence" value="ECO:0007669"/>
    <property type="project" value="UniProtKB-KW"/>
</dbReference>
<dbReference type="GO" id="GO:0016887">
    <property type="term" value="F:ATP hydrolysis activity"/>
    <property type="evidence" value="ECO:0000314"/>
    <property type="project" value="UniProtKB"/>
</dbReference>
<dbReference type="GO" id="GO:0000287">
    <property type="term" value="F:magnesium ion binding"/>
    <property type="evidence" value="ECO:0000314"/>
    <property type="project" value="UniProtKB"/>
</dbReference>
<dbReference type="GO" id="GO:0008017">
    <property type="term" value="F:microtubule binding"/>
    <property type="evidence" value="ECO:0000318"/>
    <property type="project" value="GO_Central"/>
</dbReference>
<dbReference type="GO" id="GO:0003777">
    <property type="term" value="F:microtubule motor activity"/>
    <property type="evidence" value="ECO:0000314"/>
    <property type="project" value="UniProtKB"/>
</dbReference>
<dbReference type="GO" id="GO:0042803">
    <property type="term" value="F:protein homodimerization activity"/>
    <property type="evidence" value="ECO:0000314"/>
    <property type="project" value="UniProtKB"/>
</dbReference>
<dbReference type="GO" id="GO:0007018">
    <property type="term" value="P:microtubule-based movement"/>
    <property type="evidence" value="ECO:0000314"/>
    <property type="project" value="UniProtKB"/>
</dbReference>
<dbReference type="CDD" id="cd01374">
    <property type="entry name" value="KISc_CENP_E"/>
    <property type="match status" value="1"/>
</dbReference>
<dbReference type="FunFam" id="3.40.850.10:FF:000014">
    <property type="entry name" value="Kinesin-like protein KIN-7G"/>
    <property type="match status" value="1"/>
</dbReference>
<dbReference type="Gene3D" id="3.40.850.10">
    <property type="entry name" value="Kinesin motor domain"/>
    <property type="match status" value="1"/>
</dbReference>
<dbReference type="InterPro" id="IPR027640">
    <property type="entry name" value="Kinesin-like_fam"/>
</dbReference>
<dbReference type="InterPro" id="IPR019821">
    <property type="entry name" value="Kinesin_motor_CS"/>
</dbReference>
<dbReference type="InterPro" id="IPR001752">
    <property type="entry name" value="Kinesin_motor_dom"/>
</dbReference>
<dbReference type="InterPro" id="IPR036961">
    <property type="entry name" value="Kinesin_motor_dom_sf"/>
</dbReference>
<dbReference type="InterPro" id="IPR027417">
    <property type="entry name" value="P-loop_NTPase"/>
</dbReference>
<dbReference type="PANTHER" id="PTHR47968">
    <property type="entry name" value="CENTROMERE PROTEIN E"/>
    <property type="match status" value="1"/>
</dbReference>
<dbReference type="PANTHER" id="PTHR47968:SF9">
    <property type="entry name" value="KINESIN-LIKE PROTEIN KIN-7K, CHLOROPLASTIC ISOFORM X1"/>
    <property type="match status" value="1"/>
</dbReference>
<dbReference type="Pfam" id="PF00225">
    <property type="entry name" value="Kinesin"/>
    <property type="match status" value="1"/>
</dbReference>
<dbReference type="PRINTS" id="PR00380">
    <property type="entry name" value="KINESINHEAVY"/>
</dbReference>
<dbReference type="SMART" id="SM00129">
    <property type="entry name" value="KISc"/>
    <property type="match status" value="1"/>
</dbReference>
<dbReference type="SUPFAM" id="SSF52540">
    <property type="entry name" value="P-loop containing nucleoside triphosphate hydrolases"/>
    <property type="match status" value="1"/>
</dbReference>
<dbReference type="PROSITE" id="PS00411">
    <property type="entry name" value="KINESIN_MOTOR_1"/>
    <property type="match status" value="1"/>
</dbReference>
<dbReference type="PROSITE" id="PS50067">
    <property type="entry name" value="KINESIN_MOTOR_2"/>
    <property type="match status" value="1"/>
</dbReference>
<evidence type="ECO:0000255" key="1"/>
<evidence type="ECO:0000255" key="2">
    <source>
        <dbReference type="PROSITE-ProRule" id="PRU00283"/>
    </source>
</evidence>
<evidence type="ECO:0000256" key="3">
    <source>
        <dbReference type="SAM" id="MobiDB-lite"/>
    </source>
</evidence>
<evidence type="ECO:0000269" key="4">
    <source>
    </source>
</evidence>
<evidence type="ECO:0000269" key="5">
    <source>
    </source>
</evidence>
<evidence type="ECO:0000269" key="6">
    <source>
    </source>
</evidence>
<evidence type="ECO:0000303" key="7">
    <source>
    </source>
</evidence>
<evidence type="ECO:0000303" key="8">
    <source>
    </source>
</evidence>
<evidence type="ECO:0000305" key="9"/>
<evidence type="ECO:0000312" key="10">
    <source>
        <dbReference type="EMBL" id="BAD17149.1"/>
    </source>
</evidence>
<evidence type="ECO:0000312" key="11">
    <source>
        <dbReference type="EMBL" id="BAD17367.1"/>
    </source>
</evidence>
<evidence type="ECO:0000312" key="12">
    <source>
        <dbReference type="EMBL" id="BAS81163.1"/>
    </source>
</evidence>
<evidence type="ECO:0000312" key="13">
    <source>
        <dbReference type="EMBL" id="EEE57896.1"/>
    </source>
</evidence>
<accession>Q6YZ52</accession>
<accession>B9F3I3</accession>
<organism>
    <name type="scientific">Oryza sativa subsp. japonica</name>
    <name type="common">Rice</name>
    <dbReference type="NCBI Taxonomy" id="39947"/>
    <lineage>
        <taxon>Eukaryota</taxon>
        <taxon>Viridiplantae</taxon>
        <taxon>Streptophyta</taxon>
        <taxon>Embryophyta</taxon>
        <taxon>Tracheophyta</taxon>
        <taxon>Spermatophyta</taxon>
        <taxon>Magnoliopsida</taxon>
        <taxon>Liliopsida</taxon>
        <taxon>Poales</taxon>
        <taxon>Poaceae</taxon>
        <taxon>BOP clade</taxon>
        <taxon>Oryzoideae</taxon>
        <taxon>Oryzeae</taxon>
        <taxon>Oryzinae</taxon>
        <taxon>Oryza</taxon>
        <taxon>Oryza sativa</taxon>
    </lineage>
</organism>
<comment type="function">
    <text evidence="4 5">Probable minus end-directed motor protein with a microtubule-enhanced ATPase activity. Binds ATP/ADP in vitro. Retains total enzymatic activity even after the removal of the ADP bound in the active site.</text>
</comment>
<comment type="cofactor">
    <cofactor evidence="6">
        <name>Mg(2+)</name>
        <dbReference type="ChEBI" id="CHEBI:18420"/>
    </cofactor>
</comment>
<comment type="subunit">
    <text evidence="4 5">Binds microtubules (PubMed:16672264). Homodimer (PubMed:16751590).</text>
</comment>
<comment type="subcellular location">
    <subcellularLocation>
        <location evidence="1">Plastid</location>
        <location evidence="1">Chloroplast</location>
    </subcellularLocation>
</comment>
<comment type="similarity">
    <text evidence="8">Belongs to the TRAFAC class myosin-kinesin ATPase superfamily. Kinesin family. KIN-7 subfamily.</text>
</comment>
<comment type="sequence caution" evidence="9">
    <conflict type="frameshift">
        <sequence resource="EMBL" id="AK068672"/>
    </conflict>
</comment>
<comment type="sequence caution" evidence="9">
    <conflict type="erroneous gene model prediction">
        <sequence resource="EMBL-CDS" id="BAD17149"/>
    </conflict>
</comment>
<comment type="sequence caution" evidence="9">
    <conflict type="erroneous gene model prediction">
        <sequence resource="EMBL-CDS" id="BAD17367"/>
    </conflict>
</comment>
<comment type="sequence caution" evidence="9">
    <conflict type="erroneous gene model prediction">
        <sequence resource="EMBL-CDS" id="BAS81163"/>
    </conflict>
</comment>
<comment type="sequence caution" evidence="9">
    <conflict type="erroneous gene model prediction">
        <sequence resource="EMBL-CDS" id="EEE57896"/>
    </conflict>
</comment>
<proteinExistence type="evidence at protein level"/>
<reference key="1">
    <citation type="journal article" date="2005" name="Nature">
        <title>The map-based sequence of the rice genome.</title>
        <authorList>
            <consortium name="International rice genome sequencing project (IRGSP)"/>
        </authorList>
    </citation>
    <scope>NUCLEOTIDE SEQUENCE [LARGE SCALE GENOMIC DNA]</scope>
    <source>
        <strain>cv. Nipponbare</strain>
    </source>
</reference>
<reference key="2">
    <citation type="journal article" date="2013" name="Rice">
        <title>Improvement of the Oryza sativa Nipponbare reference genome using next generation sequence and optical map data.</title>
        <authorList>
            <person name="Kawahara Y."/>
            <person name="de la Bastide M."/>
            <person name="Hamilton J.P."/>
            <person name="Kanamori H."/>
            <person name="McCombie W.R."/>
            <person name="Ouyang S."/>
            <person name="Schwartz D.C."/>
            <person name="Tanaka T."/>
            <person name="Wu J."/>
            <person name="Zhou S."/>
            <person name="Childs K.L."/>
            <person name="Davidson R.M."/>
            <person name="Lin H."/>
            <person name="Quesada-Ocampo L."/>
            <person name="Vaillancourt B."/>
            <person name="Sakai H."/>
            <person name="Lee S.S."/>
            <person name="Kim J."/>
            <person name="Numa H."/>
            <person name="Itoh T."/>
            <person name="Buell C.R."/>
            <person name="Matsumoto T."/>
        </authorList>
    </citation>
    <scope>GENOME REANNOTATION</scope>
    <source>
        <strain>cv. Nipponbare</strain>
    </source>
</reference>
<reference key="3">
    <citation type="journal article" date="2005" name="PLoS Biol.">
        <title>The genomes of Oryza sativa: a history of duplications.</title>
        <authorList>
            <person name="Yu J."/>
            <person name="Wang J."/>
            <person name="Lin W."/>
            <person name="Li S."/>
            <person name="Li H."/>
            <person name="Zhou J."/>
            <person name="Ni P."/>
            <person name="Dong W."/>
            <person name="Hu S."/>
            <person name="Zeng C."/>
            <person name="Zhang J."/>
            <person name="Zhang Y."/>
            <person name="Li R."/>
            <person name="Xu Z."/>
            <person name="Li S."/>
            <person name="Li X."/>
            <person name="Zheng H."/>
            <person name="Cong L."/>
            <person name="Lin L."/>
            <person name="Yin J."/>
            <person name="Geng J."/>
            <person name="Li G."/>
            <person name="Shi J."/>
            <person name="Liu J."/>
            <person name="Lv H."/>
            <person name="Li J."/>
            <person name="Wang J."/>
            <person name="Deng Y."/>
            <person name="Ran L."/>
            <person name="Shi X."/>
            <person name="Wang X."/>
            <person name="Wu Q."/>
            <person name="Li C."/>
            <person name="Ren X."/>
            <person name="Wang J."/>
            <person name="Wang X."/>
            <person name="Li D."/>
            <person name="Liu D."/>
            <person name="Zhang X."/>
            <person name="Ji Z."/>
            <person name="Zhao W."/>
            <person name="Sun Y."/>
            <person name="Zhang Z."/>
            <person name="Bao J."/>
            <person name="Han Y."/>
            <person name="Dong L."/>
            <person name="Ji J."/>
            <person name="Chen P."/>
            <person name="Wu S."/>
            <person name="Liu J."/>
            <person name="Xiao Y."/>
            <person name="Bu D."/>
            <person name="Tan J."/>
            <person name="Yang L."/>
            <person name="Ye C."/>
            <person name="Zhang J."/>
            <person name="Xu J."/>
            <person name="Zhou Y."/>
            <person name="Yu Y."/>
            <person name="Zhang B."/>
            <person name="Zhuang S."/>
            <person name="Wei H."/>
            <person name="Liu B."/>
            <person name="Lei M."/>
            <person name="Yu H."/>
            <person name="Li Y."/>
            <person name="Xu H."/>
            <person name="Wei S."/>
            <person name="He X."/>
            <person name="Fang L."/>
            <person name="Zhang Z."/>
            <person name="Zhang Y."/>
            <person name="Huang X."/>
            <person name="Su Z."/>
            <person name="Tong W."/>
            <person name="Li J."/>
            <person name="Tong Z."/>
            <person name="Li S."/>
            <person name="Ye J."/>
            <person name="Wang L."/>
            <person name="Fang L."/>
            <person name="Lei T."/>
            <person name="Chen C.-S."/>
            <person name="Chen H.-C."/>
            <person name="Xu Z."/>
            <person name="Li H."/>
            <person name="Huang H."/>
            <person name="Zhang F."/>
            <person name="Xu H."/>
            <person name="Li N."/>
            <person name="Zhao C."/>
            <person name="Li S."/>
            <person name="Dong L."/>
            <person name="Huang Y."/>
            <person name="Li L."/>
            <person name="Xi Y."/>
            <person name="Qi Q."/>
            <person name="Li W."/>
            <person name="Zhang B."/>
            <person name="Hu W."/>
            <person name="Zhang Y."/>
            <person name="Tian X."/>
            <person name="Jiao Y."/>
            <person name="Liang X."/>
            <person name="Jin J."/>
            <person name="Gao L."/>
            <person name="Zheng W."/>
            <person name="Hao B."/>
            <person name="Liu S.-M."/>
            <person name="Wang W."/>
            <person name="Yuan L."/>
            <person name="Cao M."/>
            <person name="McDermott J."/>
            <person name="Samudrala R."/>
            <person name="Wang J."/>
            <person name="Wong G.K.-S."/>
            <person name="Yang H."/>
        </authorList>
    </citation>
    <scope>NUCLEOTIDE SEQUENCE [LARGE SCALE GENOMIC DNA]</scope>
    <source>
        <strain>cv. Nipponbare</strain>
    </source>
</reference>
<reference key="4">
    <citation type="journal article" date="2003" name="Science">
        <title>Collection, mapping, and annotation of over 28,000 cDNA clones from japonica rice.</title>
        <authorList>
            <consortium name="The rice full-length cDNA consortium"/>
        </authorList>
    </citation>
    <scope>NUCLEOTIDE SEQUENCE [LARGE SCALE MRNA]</scope>
    <source>
        <strain>cv. Nipponbare</strain>
    </source>
</reference>
<reference key="5">
    <citation type="journal article" date="2006" name="J. Biochem.">
        <title>Preparation and characterization of a novel rice plant-specific kinesin.</title>
        <authorList>
            <person name="Umeki N."/>
            <person name="Mitsui T."/>
            <person name="Umezu N."/>
            <person name="Kondo K."/>
            <person name="Maruta S."/>
        </authorList>
    </citation>
    <scope>FUNCTION</scope>
    <scope>ATP-BINDING</scope>
    <scope>SUBUNIT</scope>
</reference>
<reference key="6">
    <citation type="journal article" date="2006" name="J. Biochem.">
        <title>Intermolecular cross-linking of a novel rice Kinesin k16 motor domain with a photoreactive ATP derivative.</title>
        <authorList>
            <person name="Umeki N."/>
            <person name="Mitsui T."/>
            <person name="Koike Y."/>
            <person name="Maruta S."/>
        </authorList>
    </citation>
    <scope>FUNCTION</scope>
    <scope>ATP-BINDING</scope>
    <scope>SUBUNIT</scope>
</reference>
<reference key="7">
    <citation type="journal article" date="2009" name="Ann. Bot.">
        <title>Evaluating the microtubule cytoskeleton and its interacting proteins in monocots by mining the rice genome.</title>
        <authorList>
            <person name="Guo L."/>
            <person name="Ho C.M."/>
            <person name="Kong Z."/>
            <person name="Lee Y.R."/>
            <person name="Qian Q."/>
            <person name="Liu B."/>
        </authorList>
    </citation>
    <scope>GENE FAMILY</scope>
    <scope>NOMENCLATURE</scope>
</reference>
<reference key="8">
    <citation type="journal article" date="2010" name="Biochem. Biophys. Res. Commun.">
        <title>Crystallographic analysis reveals a unique conformation of the ADP-bound novel rice kinesin K16.</title>
        <authorList>
            <person name="Tanaka K."/>
            <person name="Umeki N."/>
            <person name="Mitsui T."/>
            <person name="Fujimoto Z."/>
            <person name="Maruta S."/>
        </authorList>
    </citation>
    <scope>X-RAY CRYSTALLOGRAPHY (2.4 ANGSTROMS) OF 77-419 IN COMPLEX WITH ADP</scope>
    <scope>COFACTOR</scope>
</reference>
<name>KN7D_ORYSJ</name>
<protein>
    <recommendedName>
        <fullName evidence="9">Kinesin-like protein KIN-7D, chloroplastic</fullName>
    </recommendedName>
</protein>
<feature type="transit peptide" description="Chloroplast" evidence="1">
    <location>
        <begin position="1"/>
        <end position="53"/>
    </location>
</feature>
<feature type="chain" id="PRO_0000436625" description="Kinesin-like protein KIN-7D, chloroplastic">
    <location>
        <begin position="54"/>
        <end position="1007"/>
    </location>
</feature>
<feature type="domain" description="Kinesin motor" evidence="2">
    <location>
        <begin position="83"/>
        <end position="402"/>
    </location>
</feature>
<feature type="region of interest" description="Disordered" evidence="3">
    <location>
        <begin position="1"/>
        <end position="79"/>
    </location>
</feature>
<feature type="region of interest" description="Disordered" evidence="3">
    <location>
        <begin position="579"/>
        <end position="607"/>
    </location>
</feature>
<feature type="region of interest" description="Disordered" evidence="3">
    <location>
        <begin position="901"/>
        <end position="941"/>
    </location>
</feature>
<feature type="coiled-coil region" evidence="1">
    <location>
        <begin position="403"/>
        <end position="495"/>
    </location>
</feature>
<feature type="coiled-coil region" evidence="1">
    <location>
        <begin position="687"/>
        <end position="716"/>
    </location>
</feature>
<feature type="coiled-coil region" evidence="1">
    <location>
        <begin position="754"/>
        <end position="791"/>
    </location>
</feature>
<feature type="coiled-coil region" evidence="1">
    <location>
        <begin position="836"/>
        <end position="907"/>
    </location>
</feature>
<feature type="coiled-coil region" evidence="1">
    <location>
        <begin position="942"/>
        <end position="982"/>
    </location>
</feature>
<feature type="compositionally biased region" description="Low complexity" evidence="3">
    <location>
        <begin position="1"/>
        <end position="55"/>
    </location>
</feature>
<feature type="compositionally biased region" description="Basic and acidic residues" evidence="3">
    <location>
        <begin position="920"/>
        <end position="941"/>
    </location>
</feature>
<feature type="binding site" evidence="2">
    <location>
        <begin position="163"/>
        <end position="170"/>
    </location>
    <ligand>
        <name>ATP</name>
        <dbReference type="ChEBI" id="CHEBI:30616"/>
    </ligand>
</feature>
<feature type="sequence conflict" description="In Ref. 4; AK068672." evidence="9" ref="4">
    <original>D</original>
    <variation>G</variation>
    <location>
        <position position="189"/>
    </location>
</feature>
<gene>
    <name evidence="9" type="primary">KIN7D</name>
    <name evidence="7" type="synonym">K16</name>
    <name evidence="12" type="ordered locus">Os02g0775400</name>
    <name evidence="9" type="ordered locus">LOC_Os02g53520</name>
    <name evidence="10" type="ORF">OJ1448_G06.23</name>
    <name evidence="13" type="ORF">OsJ_08573</name>
    <name evidence="11" type="ORF">OSJNBb0013K01.4</name>
    <name evidence="12" type="ORF">OSNPB_020775400</name>
</gene>